<feature type="chain" id="PRO_0000283314" description="Putative F-box protein At1g47300">
    <location>
        <begin position="1"/>
        <end position="306"/>
    </location>
</feature>
<feature type="domain" description="F-box" evidence="1">
    <location>
        <begin position="1"/>
        <end position="45"/>
    </location>
</feature>
<feature type="region of interest" description="Disordered" evidence="2">
    <location>
        <begin position="235"/>
        <end position="278"/>
    </location>
</feature>
<feature type="compositionally biased region" description="Acidic residues" evidence="2">
    <location>
        <begin position="242"/>
        <end position="270"/>
    </location>
</feature>
<sequence length="306" mass="36590">MISDSIPKELILEIMLRLPAKSIARFHCVSKQWASMLSRPYFTELFLTSSSTQPRLLFAIKRNGLWCFFSLPKHQSPYDNSSSSLVVAADFHMKFLPNKIQMYSSSENRKLSCCYASGLTYFYDMYSEVRVICNPITGRYASLPYLKRYRKELSFFGFDPIDKQFKEWLKYAYSLRDDKFFTHDVFVVRVTATEMNTIQRVEIQGFGECQHEYDYYRSRVVYVFADHVEDLDVNDPKLLESKEEEEEEEEEEEEEEEEEEEEEEEEEEEESKEREKEKKIETVIGGWIKQYWACFLRKSWELNPHR</sequence>
<organism>
    <name type="scientific">Arabidopsis thaliana</name>
    <name type="common">Mouse-ear cress</name>
    <dbReference type="NCBI Taxonomy" id="3702"/>
    <lineage>
        <taxon>Eukaryota</taxon>
        <taxon>Viridiplantae</taxon>
        <taxon>Streptophyta</taxon>
        <taxon>Embryophyta</taxon>
        <taxon>Tracheophyta</taxon>
        <taxon>Spermatophyta</taxon>
        <taxon>Magnoliopsida</taxon>
        <taxon>eudicotyledons</taxon>
        <taxon>Gunneridae</taxon>
        <taxon>Pentapetalae</taxon>
        <taxon>rosids</taxon>
        <taxon>malvids</taxon>
        <taxon>Brassicales</taxon>
        <taxon>Brassicaceae</taxon>
        <taxon>Camelineae</taxon>
        <taxon>Arabidopsis</taxon>
    </lineage>
</organism>
<dbReference type="EMBL" id="AC015449">
    <property type="protein sequence ID" value="AAG11423.1"/>
    <property type="status" value="ALT_SEQ"/>
    <property type="molecule type" value="Genomic_DNA"/>
</dbReference>
<dbReference type="EMBL" id="CP002684">
    <property type="protein sequence ID" value="AEE32154.1"/>
    <property type="molecule type" value="Genomic_DNA"/>
</dbReference>
<dbReference type="PIR" id="G96513">
    <property type="entry name" value="G96513"/>
</dbReference>
<dbReference type="RefSeq" id="NP_175163.1">
    <property type="nucleotide sequence ID" value="NM_103624.1"/>
</dbReference>
<dbReference type="FunCoup" id="Q9FX02">
    <property type="interactions" value="94"/>
</dbReference>
<dbReference type="STRING" id="3702.Q9FX02"/>
<dbReference type="PaxDb" id="3702-AT1G47300.1"/>
<dbReference type="ProteomicsDB" id="230812"/>
<dbReference type="EnsemblPlants" id="AT1G47300.1">
    <property type="protein sequence ID" value="AT1G47300.1"/>
    <property type="gene ID" value="AT1G47300"/>
</dbReference>
<dbReference type="GeneID" id="841133"/>
<dbReference type="Gramene" id="AT1G47300.1">
    <property type="protein sequence ID" value="AT1G47300.1"/>
    <property type="gene ID" value="AT1G47300"/>
</dbReference>
<dbReference type="KEGG" id="ath:AT1G47300"/>
<dbReference type="Araport" id="AT1G47300"/>
<dbReference type="TAIR" id="AT1G47300"/>
<dbReference type="HOGENOM" id="CLU_910130_0_0_1"/>
<dbReference type="InParanoid" id="Q9FX02"/>
<dbReference type="OMA" id="GECQHEY"/>
<dbReference type="PhylomeDB" id="Q9FX02"/>
<dbReference type="PRO" id="PR:Q9FX02"/>
<dbReference type="Proteomes" id="UP000006548">
    <property type="component" value="Chromosome 1"/>
</dbReference>
<dbReference type="ExpressionAtlas" id="Q9FX02">
    <property type="expression patterns" value="baseline and differential"/>
</dbReference>
<dbReference type="CDD" id="cd22157">
    <property type="entry name" value="F-box_AtFBW1-like"/>
    <property type="match status" value="1"/>
</dbReference>
<dbReference type="Gene3D" id="1.20.1280.50">
    <property type="match status" value="1"/>
</dbReference>
<dbReference type="InterPro" id="IPR036047">
    <property type="entry name" value="F-box-like_dom_sf"/>
</dbReference>
<dbReference type="InterPro" id="IPR001810">
    <property type="entry name" value="F-box_dom"/>
</dbReference>
<dbReference type="PANTHER" id="PTHR31111">
    <property type="entry name" value="BNAA05G37150D PROTEIN-RELATED"/>
    <property type="match status" value="1"/>
</dbReference>
<dbReference type="PANTHER" id="PTHR31111:SF130">
    <property type="entry name" value="F-BOX ASSOCIATED UBIQUITINATION EFFECTOR FAMILY PROTEIN"/>
    <property type="match status" value="1"/>
</dbReference>
<dbReference type="Pfam" id="PF00646">
    <property type="entry name" value="F-box"/>
    <property type="match status" value="1"/>
</dbReference>
<dbReference type="SMART" id="SM00256">
    <property type="entry name" value="FBOX"/>
    <property type="match status" value="1"/>
</dbReference>
<dbReference type="SUPFAM" id="SSF81383">
    <property type="entry name" value="F-box domain"/>
    <property type="match status" value="1"/>
</dbReference>
<dbReference type="PROSITE" id="PS50181">
    <property type="entry name" value="FBOX"/>
    <property type="match status" value="1"/>
</dbReference>
<accession>Q9FX02</accession>
<proteinExistence type="predicted"/>
<keyword id="KW-1185">Reference proteome</keyword>
<evidence type="ECO:0000255" key="1">
    <source>
        <dbReference type="PROSITE-ProRule" id="PRU00080"/>
    </source>
</evidence>
<evidence type="ECO:0000256" key="2">
    <source>
        <dbReference type="SAM" id="MobiDB-lite"/>
    </source>
</evidence>
<evidence type="ECO:0000305" key="3"/>
<protein>
    <recommendedName>
        <fullName>Putative F-box protein At1g47300</fullName>
    </recommendedName>
</protein>
<name>FB38_ARATH</name>
<reference key="1">
    <citation type="journal article" date="2000" name="Nature">
        <title>Sequence and analysis of chromosome 1 of the plant Arabidopsis thaliana.</title>
        <authorList>
            <person name="Theologis A."/>
            <person name="Ecker J.R."/>
            <person name="Palm C.J."/>
            <person name="Federspiel N.A."/>
            <person name="Kaul S."/>
            <person name="White O."/>
            <person name="Alonso J."/>
            <person name="Altafi H."/>
            <person name="Araujo R."/>
            <person name="Bowman C.L."/>
            <person name="Brooks S.Y."/>
            <person name="Buehler E."/>
            <person name="Chan A."/>
            <person name="Chao Q."/>
            <person name="Chen H."/>
            <person name="Cheuk R.F."/>
            <person name="Chin C.W."/>
            <person name="Chung M.K."/>
            <person name="Conn L."/>
            <person name="Conway A.B."/>
            <person name="Conway A.R."/>
            <person name="Creasy T.H."/>
            <person name="Dewar K."/>
            <person name="Dunn P."/>
            <person name="Etgu P."/>
            <person name="Feldblyum T.V."/>
            <person name="Feng J.-D."/>
            <person name="Fong B."/>
            <person name="Fujii C.Y."/>
            <person name="Gill J.E."/>
            <person name="Goldsmith A.D."/>
            <person name="Haas B."/>
            <person name="Hansen N.F."/>
            <person name="Hughes B."/>
            <person name="Huizar L."/>
            <person name="Hunter J.L."/>
            <person name="Jenkins J."/>
            <person name="Johnson-Hopson C."/>
            <person name="Khan S."/>
            <person name="Khaykin E."/>
            <person name="Kim C.J."/>
            <person name="Koo H.L."/>
            <person name="Kremenetskaia I."/>
            <person name="Kurtz D.B."/>
            <person name="Kwan A."/>
            <person name="Lam B."/>
            <person name="Langin-Hooper S."/>
            <person name="Lee A."/>
            <person name="Lee J.M."/>
            <person name="Lenz C.A."/>
            <person name="Li J.H."/>
            <person name="Li Y.-P."/>
            <person name="Lin X."/>
            <person name="Liu S.X."/>
            <person name="Liu Z.A."/>
            <person name="Luros J.S."/>
            <person name="Maiti R."/>
            <person name="Marziali A."/>
            <person name="Militscher J."/>
            <person name="Miranda M."/>
            <person name="Nguyen M."/>
            <person name="Nierman W.C."/>
            <person name="Osborne B.I."/>
            <person name="Pai G."/>
            <person name="Peterson J."/>
            <person name="Pham P.K."/>
            <person name="Rizzo M."/>
            <person name="Rooney T."/>
            <person name="Rowley D."/>
            <person name="Sakano H."/>
            <person name="Salzberg S.L."/>
            <person name="Schwartz J.R."/>
            <person name="Shinn P."/>
            <person name="Southwick A.M."/>
            <person name="Sun H."/>
            <person name="Tallon L.J."/>
            <person name="Tambunga G."/>
            <person name="Toriumi M.J."/>
            <person name="Town C.D."/>
            <person name="Utterback T."/>
            <person name="Van Aken S."/>
            <person name="Vaysberg M."/>
            <person name="Vysotskaia V.S."/>
            <person name="Walker M."/>
            <person name="Wu D."/>
            <person name="Yu G."/>
            <person name="Fraser C.M."/>
            <person name="Venter J.C."/>
            <person name="Davis R.W."/>
        </authorList>
    </citation>
    <scope>NUCLEOTIDE SEQUENCE [LARGE SCALE GENOMIC DNA]</scope>
    <source>
        <strain>cv. Columbia</strain>
    </source>
</reference>
<reference key="2">
    <citation type="journal article" date="2017" name="Plant J.">
        <title>Araport11: a complete reannotation of the Arabidopsis thaliana reference genome.</title>
        <authorList>
            <person name="Cheng C.Y."/>
            <person name="Krishnakumar V."/>
            <person name="Chan A.P."/>
            <person name="Thibaud-Nissen F."/>
            <person name="Schobel S."/>
            <person name="Town C.D."/>
        </authorList>
    </citation>
    <scope>GENOME REANNOTATION</scope>
    <source>
        <strain>cv. Columbia</strain>
    </source>
</reference>
<comment type="sequence caution" evidence="3">
    <conflict type="erroneous gene model prediction">
        <sequence resource="EMBL-CDS" id="AAG11423"/>
    </conflict>
</comment>
<gene>
    <name type="ordered locus">At1g47300</name>
    <name type="ORF">T3F24.8</name>
</gene>